<feature type="chain" id="PRO_0000378415" description="Protein VP5">
    <location>
        <begin position="1"/>
        <end position="237"/>
    </location>
</feature>
<feature type="topological domain" description="Cytoplasmic" evidence="1">
    <location>
        <begin position="1"/>
        <end position="148"/>
    </location>
</feature>
<feature type="transmembrane region" description="Helical" evidence="1">
    <location>
        <begin position="149"/>
        <end position="165"/>
    </location>
</feature>
<feature type="topological domain" description="Extracellular" evidence="1">
    <location>
        <begin position="166"/>
        <end position="237"/>
    </location>
</feature>
<feature type="region of interest" description="Disordered" evidence="2">
    <location>
        <begin position="84"/>
        <end position="237"/>
    </location>
</feature>
<feature type="compositionally biased region" description="Basic and acidic residues" evidence="2">
    <location>
        <begin position="85"/>
        <end position="97"/>
    </location>
</feature>
<feature type="compositionally biased region" description="Basic and acidic residues" evidence="2">
    <location>
        <begin position="116"/>
        <end position="130"/>
    </location>
</feature>
<feature type="compositionally biased region" description="Basic residues" evidence="2">
    <location>
        <begin position="214"/>
        <end position="231"/>
    </location>
</feature>
<gene>
    <name type="primary">VP5</name>
</gene>
<comment type="subcellular location">
    <subcellularLocation>
        <location evidence="3">Host membrane</location>
        <topology evidence="3">Single-pass membrane protein</topology>
    </subcellularLocation>
</comment>
<organism>
    <name type="scientific">Drosophila x virus (isolate Chung/1996)</name>
    <name type="common">DXV</name>
    <dbReference type="NCBI Taxonomy" id="654931"/>
    <lineage>
        <taxon>Viruses</taxon>
        <taxon>Riboviria</taxon>
        <taxon>Orthornavirae</taxon>
        <taxon>Birnaviridae</taxon>
        <taxon>Entomobirnavirus</taxon>
        <taxon>Entomobirnavirus drosophilae</taxon>
    </lineage>
</organism>
<proteinExistence type="predicted"/>
<sequence>MLSIIRRKTRIVDITKQGNGNVPPACHLCSRRLTKEWSFGEGTICSFHRIRCRVQCGRSFWHQPETPIDGLSWDSTTWELTRISSSKDPDISGQKDKRYGRRKEKNPKTDPPALDSRVREHEPIHEHEPIPGRVGPADTKQRCKANLRGDSGFVSIGRSNHPKLSREDCHNTRVPPGTQGVRGGNVQLDKPRERPVSYQHGSKKRSEHRNPVSRSHRRKKAKTRTKTSKLGKSRDIC</sequence>
<reference key="1">
    <citation type="journal article" date="1996" name="Virology">
        <title>Sequence analysis of the bicistronic Drosophila X virus genome segment A and its encoded polypeptides.</title>
        <authorList>
            <person name="Chung H.K."/>
            <person name="Kordyban S."/>
            <person name="Cameron L."/>
            <person name="Dobos P."/>
        </authorList>
    </citation>
    <scope>NUCLEOTIDE SEQUENCE [GENOMIC RNA]</scope>
</reference>
<evidence type="ECO:0000255" key="1"/>
<evidence type="ECO:0000256" key="2">
    <source>
        <dbReference type="SAM" id="MobiDB-lite"/>
    </source>
</evidence>
<evidence type="ECO:0000305" key="3"/>
<keyword id="KW-1043">Host membrane</keyword>
<keyword id="KW-0472">Membrane</keyword>
<keyword id="KW-1185">Reference proteome</keyword>
<keyword id="KW-0812">Transmembrane</keyword>
<keyword id="KW-1133">Transmembrane helix</keyword>
<dbReference type="EMBL" id="U60650">
    <property type="status" value="NOT_ANNOTATED_CDS"/>
    <property type="molecule type" value="Genomic_RNA"/>
</dbReference>
<dbReference type="Proteomes" id="UP000000515">
    <property type="component" value="Genome"/>
</dbReference>
<dbReference type="GO" id="GO:0033644">
    <property type="term" value="C:host cell membrane"/>
    <property type="evidence" value="ECO:0007669"/>
    <property type="project" value="UniProtKB-SubCell"/>
</dbReference>
<dbReference type="GO" id="GO:0016020">
    <property type="term" value="C:membrane"/>
    <property type="evidence" value="ECO:0007669"/>
    <property type="project" value="UniProtKB-KW"/>
</dbReference>
<protein>
    <recommendedName>
        <fullName>Protein VP5</fullName>
    </recommendedName>
</protein>
<organismHost>
    <name type="scientific">Drosophila melanogaster</name>
    <name type="common">Fruit fly</name>
    <dbReference type="NCBI Taxonomy" id="7227"/>
</organismHost>
<accession>P0C748</accession>
<name>VP5_DXV96</name>